<organism>
    <name type="scientific">Prochlorococcus marinus (strain NATL1A)</name>
    <dbReference type="NCBI Taxonomy" id="167555"/>
    <lineage>
        <taxon>Bacteria</taxon>
        <taxon>Bacillati</taxon>
        <taxon>Cyanobacteriota</taxon>
        <taxon>Cyanophyceae</taxon>
        <taxon>Synechococcales</taxon>
        <taxon>Prochlorococcaceae</taxon>
        <taxon>Prochlorococcus</taxon>
    </lineage>
</organism>
<name>KAD_PROM1</name>
<dbReference type="EC" id="2.7.4.3" evidence="1"/>
<dbReference type="EMBL" id="CP000553">
    <property type="protein sequence ID" value="ABM76540.1"/>
    <property type="molecule type" value="Genomic_DNA"/>
</dbReference>
<dbReference type="RefSeq" id="WP_011824502.1">
    <property type="nucleotide sequence ID" value="NC_008819.1"/>
</dbReference>
<dbReference type="SMR" id="A2C4Y0"/>
<dbReference type="KEGG" id="pme:NATL1_19841"/>
<dbReference type="eggNOG" id="COG0563">
    <property type="taxonomic scope" value="Bacteria"/>
</dbReference>
<dbReference type="HOGENOM" id="CLU_032354_4_1_3"/>
<dbReference type="UniPathway" id="UPA00588">
    <property type="reaction ID" value="UER00649"/>
</dbReference>
<dbReference type="Proteomes" id="UP000002592">
    <property type="component" value="Chromosome"/>
</dbReference>
<dbReference type="GO" id="GO:0005737">
    <property type="term" value="C:cytoplasm"/>
    <property type="evidence" value="ECO:0007669"/>
    <property type="project" value="UniProtKB-SubCell"/>
</dbReference>
<dbReference type="GO" id="GO:0004017">
    <property type="term" value="F:adenylate kinase activity"/>
    <property type="evidence" value="ECO:0007669"/>
    <property type="project" value="UniProtKB-UniRule"/>
</dbReference>
<dbReference type="GO" id="GO:0005524">
    <property type="term" value="F:ATP binding"/>
    <property type="evidence" value="ECO:0007669"/>
    <property type="project" value="UniProtKB-UniRule"/>
</dbReference>
<dbReference type="GO" id="GO:0044209">
    <property type="term" value="P:AMP salvage"/>
    <property type="evidence" value="ECO:0007669"/>
    <property type="project" value="UniProtKB-UniRule"/>
</dbReference>
<dbReference type="CDD" id="cd01428">
    <property type="entry name" value="ADK"/>
    <property type="match status" value="1"/>
</dbReference>
<dbReference type="Gene3D" id="3.40.50.300">
    <property type="entry name" value="P-loop containing nucleotide triphosphate hydrolases"/>
    <property type="match status" value="1"/>
</dbReference>
<dbReference type="HAMAP" id="MF_00235">
    <property type="entry name" value="Adenylate_kinase_Adk"/>
    <property type="match status" value="1"/>
</dbReference>
<dbReference type="InterPro" id="IPR000850">
    <property type="entry name" value="Adenylat/UMP-CMP_kin"/>
</dbReference>
<dbReference type="InterPro" id="IPR033690">
    <property type="entry name" value="Adenylat_kinase_CS"/>
</dbReference>
<dbReference type="InterPro" id="IPR027417">
    <property type="entry name" value="P-loop_NTPase"/>
</dbReference>
<dbReference type="NCBIfam" id="NF001381">
    <property type="entry name" value="PRK00279.1-3"/>
    <property type="match status" value="1"/>
</dbReference>
<dbReference type="NCBIfam" id="NF011100">
    <property type="entry name" value="PRK14527.1"/>
    <property type="match status" value="1"/>
</dbReference>
<dbReference type="NCBIfam" id="NF011104">
    <property type="entry name" value="PRK14531.1"/>
    <property type="match status" value="1"/>
</dbReference>
<dbReference type="NCBIfam" id="NF011105">
    <property type="entry name" value="PRK14532.1"/>
    <property type="match status" value="1"/>
</dbReference>
<dbReference type="PANTHER" id="PTHR23359">
    <property type="entry name" value="NUCLEOTIDE KINASE"/>
    <property type="match status" value="1"/>
</dbReference>
<dbReference type="Pfam" id="PF00406">
    <property type="entry name" value="ADK"/>
    <property type="match status" value="1"/>
</dbReference>
<dbReference type="PRINTS" id="PR00094">
    <property type="entry name" value="ADENYLTKNASE"/>
</dbReference>
<dbReference type="SUPFAM" id="SSF52540">
    <property type="entry name" value="P-loop containing nucleoside triphosphate hydrolases"/>
    <property type="match status" value="1"/>
</dbReference>
<dbReference type="PROSITE" id="PS00113">
    <property type="entry name" value="ADENYLATE_KINASE"/>
    <property type="match status" value="1"/>
</dbReference>
<comment type="function">
    <text evidence="1">Catalyzes the reversible transfer of the terminal phosphate group between ATP and AMP. Plays an important role in cellular energy homeostasis and in adenine nucleotide metabolism.</text>
</comment>
<comment type="catalytic activity">
    <reaction evidence="1">
        <text>AMP + ATP = 2 ADP</text>
        <dbReference type="Rhea" id="RHEA:12973"/>
        <dbReference type="ChEBI" id="CHEBI:30616"/>
        <dbReference type="ChEBI" id="CHEBI:456215"/>
        <dbReference type="ChEBI" id="CHEBI:456216"/>
        <dbReference type="EC" id="2.7.4.3"/>
    </reaction>
</comment>
<comment type="pathway">
    <text evidence="1">Purine metabolism; AMP biosynthesis via salvage pathway; AMP from ADP: step 1/1.</text>
</comment>
<comment type="subunit">
    <text evidence="1">Monomer.</text>
</comment>
<comment type="subcellular location">
    <subcellularLocation>
        <location evidence="1">Cytoplasm</location>
    </subcellularLocation>
</comment>
<comment type="domain">
    <text evidence="1">Consists of three domains, a large central CORE domain and two small peripheral domains, NMPbind and LID, which undergo movements during catalysis. The LID domain closes over the site of phosphoryl transfer upon ATP binding. Assembling and dissambling the active center during each catalytic cycle provides an effective means to prevent ATP hydrolysis.</text>
</comment>
<comment type="similarity">
    <text evidence="1">Belongs to the adenylate kinase family.</text>
</comment>
<proteinExistence type="inferred from homology"/>
<feature type="chain" id="PRO_1000058873" description="Adenylate kinase">
    <location>
        <begin position="1"/>
        <end position="182"/>
    </location>
</feature>
<feature type="region of interest" description="NMP" evidence="1">
    <location>
        <begin position="32"/>
        <end position="61"/>
    </location>
</feature>
<feature type="region of interest" description="LID" evidence="1">
    <location>
        <begin position="126"/>
        <end position="132"/>
    </location>
</feature>
<feature type="binding site" evidence="1">
    <location>
        <begin position="12"/>
        <end position="17"/>
    </location>
    <ligand>
        <name>ATP</name>
        <dbReference type="ChEBI" id="CHEBI:30616"/>
    </ligand>
</feature>
<feature type="binding site" evidence="1">
    <location>
        <position position="33"/>
    </location>
    <ligand>
        <name>AMP</name>
        <dbReference type="ChEBI" id="CHEBI:456215"/>
    </ligand>
</feature>
<feature type="binding site" evidence="1">
    <location>
        <position position="38"/>
    </location>
    <ligand>
        <name>AMP</name>
        <dbReference type="ChEBI" id="CHEBI:456215"/>
    </ligand>
</feature>
<feature type="binding site" evidence="1">
    <location>
        <begin position="59"/>
        <end position="61"/>
    </location>
    <ligand>
        <name>AMP</name>
        <dbReference type="ChEBI" id="CHEBI:456215"/>
    </ligand>
</feature>
<feature type="binding site" evidence="1">
    <location>
        <begin position="85"/>
        <end position="88"/>
    </location>
    <ligand>
        <name>AMP</name>
        <dbReference type="ChEBI" id="CHEBI:456215"/>
    </ligand>
</feature>
<feature type="binding site" evidence="1">
    <location>
        <position position="92"/>
    </location>
    <ligand>
        <name>AMP</name>
        <dbReference type="ChEBI" id="CHEBI:456215"/>
    </ligand>
</feature>
<feature type="binding site" evidence="1">
    <location>
        <position position="127"/>
    </location>
    <ligand>
        <name>ATP</name>
        <dbReference type="ChEBI" id="CHEBI:30616"/>
    </ligand>
</feature>
<feature type="binding site" evidence="1">
    <location>
        <position position="129"/>
    </location>
    <ligand>
        <name>AMP</name>
        <dbReference type="ChEBI" id="CHEBI:456215"/>
    </ligand>
</feature>
<feature type="binding site" evidence="1">
    <location>
        <position position="140"/>
    </location>
    <ligand>
        <name>AMP</name>
        <dbReference type="ChEBI" id="CHEBI:456215"/>
    </ligand>
</feature>
<feature type="binding site" evidence="1">
    <location>
        <position position="168"/>
    </location>
    <ligand>
        <name>ATP</name>
        <dbReference type="ChEBI" id="CHEBI:30616"/>
    </ligand>
</feature>
<protein>
    <recommendedName>
        <fullName evidence="1">Adenylate kinase</fullName>
        <shortName evidence="1">AK</shortName>
        <ecNumber evidence="1">2.7.4.3</ecNumber>
    </recommendedName>
    <alternativeName>
        <fullName evidence="1">ATP-AMP transphosphorylase</fullName>
    </alternativeName>
    <alternativeName>
        <fullName evidence="1">ATP:AMP phosphotransferase</fullName>
    </alternativeName>
    <alternativeName>
        <fullName evidence="1">Adenylate monophosphate kinase</fullName>
    </alternativeName>
</protein>
<reference key="1">
    <citation type="journal article" date="2007" name="PLoS Genet.">
        <title>Patterns and implications of gene gain and loss in the evolution of Prochlorococcus.</title>
        <authorList>
            <person name="Kettler G.C."/>
            <person name="Martiny A.C."/>
            <person name="Huang K."/>
            <person name="Zucker J."/>
            <person name="Coleman M.L."/>
            <person name="Rodrigue S."/>
            <person name="Chen F."/>
            <person name="Lapidus A."/>
            <person name="Ferriera S."/>
            <person name="Johnson J."/>
            <person name="Steglich C."/>
            <person name="Church G.M."/>
            <person name="Richardson P."/>
            <person name="Chisholm S.W."/>
        </authorList>
    </citation>
    <scope>NUCLEOTIDE SEQUENCE [LARGE SCALE GENOMIC DNA]</scope>
    <source>
        <strain>NATL1A</strain>
    </source>
</reference>
<accession>A2C4Y0</accession>
<gene>
    <name evidence="1" type="primary">adk</name>
    <name type="ordered locus">NATL1_19841</name>
</gene>
<keyword id="KW-0067">ATP-binding</keyword>
<keyword id="KW-0963">Cytoplasm</keyword>
<keyword id="KW-0418">Kinase</keyword>
<keyword id="KW-0545">Nucleotide biosynthesis</keyword>
<keyword id="KW-0547">Nucleotide-binding</keyword>
<keyword id="KW-0808">Transferase</keyword>
<sequence length="182" mass="20218">MKKKLLFLGPPGAGKGTQANLFCKKYGLIHLSTGDLLRDEVSSGSVLGIKAAEIMNKGELVSDELVLSIVEGRLLNINEGWLLDGFPRNVNQANSLKDLLEKINQPLEGVILIKVADDYLIKRLVERGRQDDNEQVITNRLKIYREKTSPLIDLYKKQGILEEIEGNADIDVVFSCIEKSLG</sequence>
<evidence type="ECO:0000255" key="1">
    <source>
        <dbReference type="HAMAP-Rule" id="MF_00235"/>
    </source>
</evidence>